<proteinExistence type="inferred from homology"/>
<sequence length="213" mass="24261">MSERSVSKRTEQKRWYTVQAPEQFDREVLGKTPAEEPDKVLGRTIETTLGELTNDASENNTKLTFKINEVASDSAYTEFIRHELTRDYLRSLVRRGSSKVEAYITVLTTDDYRVQIQPVAVTTKKADASQEKAIRRTMIDLVRETAEDHTFEQLIDSVVEGRLSSAIYGEAKDIYPLRRVEIKKTTLEARPEEVAAEEETAVDVDEEDVDVEA</sequence>
<name>RS3A_HALMA</name>
<protein>
    <recommendedName>
        <fullName evidence="1">Small ribosomal subunit protein eS1</fullName>
    </recommendedName>
    <alternativeName>
        <fullName evidence="3">30S ribosomal protein S3Ae</fullName>
    </alternativeName>
    <alternativeName>
        <fullName evidence="1">Ribosomal protein S1e</fullName>
    </alternativeName>
</protein>
<organism>
    <name type="scientific">Haloarcula marismortui (strain ATCC 43049 / DSM 3752 / JCM 8966 / VKM B-1809)</name>
    <name type="common">Halobacterium marismortui</name>
    <dbReference type="NCBI Taxonomy" id="272569"/>
    <lineage>
        <taxon>Archaea</taxon>
        <taxon>Methanobacteriati</taxon>
        <taxon>Methanobacteriota</taxon>
        <taxon>Stenosarchaea group</taxon>
        <taxon>Halobacteria</taxon>
        <taxon>Halobacteriales</taxon>
        <taxon>Haloarculaceae</taxon>
        <taxon>Haloarcula</taxon>
    </lineage>
</organism>
<dbReference type="EMBL" id="AY596297">
    <property type="protein sequence ID" value="AAV46356.1"/>
    <property type="molecule type" value="Genomic_DNA"/>
</dbReference>
<dbReference type="RefSeq" id="WP_004957064.1">
    <property type="nucleotide sequence ID" value="NZ_CP039138.1"/>
</dbReference>
<dbReference type="SMR" id="Q5V296"/>
<dbReference type="STRING" id="272569.rrnAC1429"/>
<dbReference type="PaxDb" id="272569-rrnAC1429"/>
<dbReference type="EnsemblBacteria" id="AAV46356">
    <property type="protein sequence ID" value="AAV46356"/>
    <property type="gene ID" value="rrnAC1429"/>
</dbReference>
<dbReference type="KEGG" id="hma:rrnAC1429"/>
<dbReference type="PATRIC" id="fig|272569.17.peg.2125"/>
<dbReference type="eggNOG" id="arCOG04186">
    <property type="taxonomic scope" value="Archaea"/>
</dbReference>
<dbReference type="HOGENOM" id="CLU_062507_1_0_2"/>
<dbReference type="Proteomes" id="UP000001169">
    <property type="component" value="Chromosome I"/>
</dbReference>
<dbReference type="GO" id="GO:1990904">
    <property type="term" value="C:ribonucleoprotein complex"/>
    <property type="evidence" value="ECO:0007669"/>
    <property type="project" value="UniProtKB-KW"/>
</dbReference>
<dbReference type="GO" id="GO:0005840">
    <property type="term" value="C:ribosome"/>
    <property type="evidence" value="ECO:0007669"/>
    <property type="project" value="UniProtKB-KW"/>
</dbReference>
<dbReference type="GO" id="GO:0003735">
    <property type="term" value="F:structural constituent of ribosome"/>
    <property type="evidence" value="ECO:0007669"/>
    <property type="project" value="InterPro"/>
</dbReference>
<dbReference type="GO" id="GO:0006412">
    <property type="term" value="P:translation"/>
    <property type="evidence" value="ECO:0007669"/>
    <property type="project" value="UniProtKB-UniRule"/>
</dbReference>
<dbReference type="HAMAP" id="MF_00359">
    <property type="entry name" value="Ribosomal_eS1"/>
    <property type="match status" value="1"/>
</dbReference>
<dbReference type="InterPro" id="IPR001593">
    <property type="entry name" value="Ribosomal_eS1"/>
</dbReference>
<dbReference type="InterPro" id="IPR030838">
    <property type="entry name" value="Ribosomal_eS1_arc"/>
</dbReference>
<dbReference type="InterPro" id="IPR018281">
    <property type="entry name" value="Ribosomal_eS1_CS"/>
</dbReference>
<dbReference type="NCBIfam" id="NF003142">
    <property type="entry name" value="PRK04057.1"/>
    <property type="match status" value="1"/>
</dbReference>
<dbReference type="Pfam" id="PF01015">
    <property type="entry name" value="Ribosomal_S3Ae"/>
    <property type="match status" value="1"/>
</dbReference>
<dbReference type="SMART" id="SM01397">
    <property type="entry name" value="Ribosomal_S3Ae"/>
    <property type="match status" value="1"/>
</dbReference>
<dbReference type="PROSITE" id="PS01191">
    <property type="entry name" value="RIBOSOMAL_S3AE"/>
    <property type="match status" value="1"/>
</dbReference>
<comment type="similarity">
    <text evidence="1">Belongs to the eukaryotic ribosomal protein eS1 family.</text>
</comment>
<reference key="1">
    <citation type="journal article" date="2004" name="Genome Res.">
        <title>Genome sequence of Haloarcula marismortui: a halophilic archaeon from the Dead Sea.</title>
        <authorList>
            <person name="Baliga N.S."/>
            <person name="Bonneau R."/>
            <person name="Facciotti M.T."/>
            <person name="Pan M."/>
            <person name="Glusman G."/>
            <person name="Deutsch E.W."/>
            <person name="Shannon P."/>
            <person name="Chiu Y."/>
            <person name="Weng R.S."/>
            <person name="Gan R.R."/>
            <person name="Hung P."/>
            <person name="Date S.V."/>
            <person name="Marcotte E."/>
            <person name="Hood L."/>
            <person name="Ng W.V."/>
        </authorList>
    </citation>
    <scope>NUCLEOTIDE SEQUENCE [LARGE SCALE GENOMIC DNA]</scope>
    <source>
        <strain>ATCC 43049 / DSM 3752 / JCM 8966 / VKM B-1809</strain>
    </source>
</reference>
<accession>Q5V296</accession>
<gene>
    <name evidence="1" type="primary">rps3ae</name>
    <name type="ordered locus">rrnAC1429</name>
</gene>
<feature type="chain" id="PRO_0000153545" description="Small ribosomal subunit protein eS1">
    <location>
        <begin position="1"/>
        <end position="213"/>
    </location>
</feature>
<feature type="region of interest" description="Disordered" evidence="2">
    <location>
        <begin position="189"/>
        <end position="213"/>
    </location>
</feature>
<feature type="compositionally biased region" description="Acidic residues" evidence="2">
    <location>
        <begin position="194"/>
        <end position="213"/>
    </location>
</feature>
<evidence type="ECO:0000255" key="1">
    <source>
        <dbReference type="HAMAP-Rule" id="MF_00359"/>
    </source>
</evidence>
<evidence type="ECO:0000256" key="2">
    <source>
        <dbReference type="SAM" id="MobiDB-lite"/>
    </source>
</evidence>
<evidence type="ECO:0000305" key="3"/>
<keyword id="KW-1185">Reference proteome</keyword>
<keyword id="KW-0687">Ribonucleoprotein</keyword>
<keyword id="KW-0689">Ribosomal protein</keyword>